<sequence length="313" mass="34152">MTDLDSSLPPSVRTAGDSWTITELVGATALGVAAARAAETAGPDPLIRDEFAGLLVSSASPAWARLADPELSWLDDDPHGKRAHRVGIDYQAVRTHYFDEYFDGALRAGIRQVVILAAGLDSRAYRLNWPAGTTVYEIDQPKVLEYKTETLQRHGATPAAVRRPVPVDLRDDWPAALTAAGFQAARPTAWLAEGLLPYLPSDAQDRLFEMVTALSAAGSQVAVEVFGMNSRSNAQRWLRMRERLGLDVNVAALTYHEPDRSDAAAWLARHGWRVHSVDNRDEMARLGRPVPEDLSDEAVRSTLLRAHLGGSTG</sequence>
<feature type="chain" id="PRO_0000361180" description="Putative S-adenosyl-L-methionine-dependent methyltransferase MAP_3563">
    <location>
        <begin position="1"/>
        <end position="313"/>
    </location>
</feature>
<feature type="binding site" evidence="1">
    <location>
        <position position="139"/>
    </location>
    <ligand>
        <name>S-adenosyl-L-methionine</name>
        <dbReference type="ChEBI" id="CHEBI:59789"/>
    </ligand>
</feature>
<feature type="binding site" evidence="1">
    <location>
        <begin position="168"/>
        <end position="169"/>
    </location>
    <ligand>
        <name>S-adenosyl-L-methionine</name>
        <dbReference type="ChEBI" id="CHEBI:59789"/>
    </ligand>
</feature>
<name>Y3563_MYCPA</name>
<proteinExistence type="inferred from homology"/>
<protein>
    <recommendedName>
        <fullName>Putative S-adenosyl-L-methionine-dependent methyltransferase MAP_3563</fullName>
        <ecNumber>2.1.1.-</ecNumber>
    </recommendedName>
</protein>
<dbReference type="EC" id="2.1.1.-"/>
<dbReference type="EMBL" id="AE016958">
    <property type="protein sequence ID" value="AAS06113.1"/>
    <property type="molecule type" value="Genomic_DNA"/>
</dbReference>
<dbReference type="RefSeq" id="WP_003879067.1">
    <property type="nucleotide sequence ID" value="NZ_CP106873.1"/>
</dbReference>
<dbReference type="SMR" id="Q73U05"/>
<dbReference type="STRING" id="262316.MAP_3563"/>
<dbReference type="KEGG" id="mpa:MAP_3563"/>
<dbReference type="PATRIC" id="fig|262316.17.peg.3793"/>
<dbReference type="eggNOG" id="COG3315">
    <property type="taxonomic scope" value="Bacteria"/>
</dbReference>
<dbReference type="HOGENOM" id="CLU_056160_2_1_11"/>
<dbReference type="Proteomes" id="UP000000580">
    <property type="component" value="Chromosome"/>
</dbReference>
<dbReference type="GO" id="GO:0008168">
    <property type="term" value="F:methyltransferase activity"/>
    <property type="evidence" value="ECO:0007669"/>
    <property type="project" value="UniProtKB-KW"/>
</dbReference>
<dbReference type="GO" id="GO:0032259">
    <property type="term" value="P:methylation"/>
    <property type="evidence" value="ECO:0007669"/>
    <property type="project" value="UniProtKB-KW"/>
</dbReference>
<dbReference type="Gene3D" id="3.40.50.150">
    <property type="entry name" value="Vaccinia Virus protein VP39"/>
    <property type="match status" value="1"/>
</dbReference>
<dbReference type="InterPro" id="IPR007213">
    <property type="entry name" value="Ppm1/Ppm2/Tcmp"/>
</dbReference>
<dbReference type="InterPro" id="IPR029063">
    <property type="entry name" value="SAM-dependent_MTases_sf"/>
</dbReference>
<dbReference type="InterPro" id="IPR011610">
    <property type="entry name" value="SAM_mthyl_Trfase_ML2640-like"/>
</dbReference>
<dbReference type="NCBIfam" id="TIGR00027">
    <property type="entry name" value="mthyl_TIGR00027"/>
    <property type="match status" value="1"/>
</dbReference>
<dbReference type="PANTHER" id="PTHR43619">
    <property type="entry name" value="S-ADENOSYL-L-METHIONINE-DEPENDENT METHYLTRANSFERASE YKTD-RELATED"/>
    <property type="match status" value="1"/>
</dbReference>
<dbReference type="PANTHER" id="PTHR43619:SF2">
    <property type="entry name" value="S-ADENOSYL-L-METHIONINE-DEPENDENT METHYLTRANSFERASES SUPERFAMILY PROTEIN"/>
    <property type="match status" value="1"/>
</dbReference>
<dbReference type="Pfam" id="PF04072">
    <property type="entry name" value="LCM"/>
    <property type="match status" value="1"/>
</dbReference>
<dbReference type="SUPFAM" id="SSF53335">
    <property type="entry name" value="S-adenosyl-L-methionine-dependent methyltransferases"/>
    <property type="match status" value="1"/>
</dbReference>
<gene>
    <name type="ordered locus">MAP_3563</name>
</gene>
<comment type="function">
    <text evidence="1">Exhibits S-adenosyl-L-methionine-dependent methyltransferase activity.</text>
</comment>
<comment type="similarity">
    <text evidence="2">Belongs to the UPF0677 family.</text>
</comment>
<reference key="1">
    <citation type="journal article" date="2005" name="Proc. Natl. Acad. Sci. U.S.A.">
        <title>The complete genome sequence of Mycobacterium avium subspecies paratuberculosis.</title>
        <authorList>
            <person name="Li L."/>
            <person name="Bannantine J.P."/>
            <person name="Zhang Q."/>
            <person name="Amonsin A."/>
            <person name="May B.J."/>
            <person name="Alt D."/>
            <person name="Banerji N."/>
            <person name="Kanjilal S."/>
            <person name="Kapur V."/>
        </authorList>
    </citation>
    <scope>NUCLEOTIDE SEQUENCE [LARGE SCALE GENOMIC DNA]</scope>
    <source>
        <strain>ATCC BAA-968 / K-10</strain>
    </source>
</reference>
<organism>
    <name type="scientific">Mycolicibacterium paratuberculosis (strain ATCC BAA-968 / K-10)</name>
    <name type="common">Mycobacterium paratuberculosis</name>
    <dbReference type="NCBI Taxonomy" id="262316"/>
    <lineage>
        <taxon>Bacteria</taxon>
        <taxon>Bacillati</taxon>
        <taxon>Actinomycetota</taxon>
        <taxon>Actinomycetes</taxon>
        <taxon>Mycobacteriales</taxon>
        <taxon>Mycobacteriaceae</taxon>
        <taxon>Mycobacterium</taxon>
        <taxon>Mycobacterium avium complex (MAC)</taxon>
    </lineage>
</organism>
<keyword id="KW-0489">Methyltransferase</keyword>
<keyword id="KW-1185">Reference proteome</keyword>
<keyword id="KW-0949">S-adenosyl-L-methionine</keyword>
<keyword id="KW-0808">Transferase</keyword>
<accession>Q73U05</accession>
<evidence type="ECO:0000250" key="1"/>
<evidence type="ECO:0000305" key="2"/>